<comment type="function">
    <text evidence="1">Binds 23S rRNA and is also seen to make contacts with the A and possibly P site tRNAs.</text>
</comment>
<comment type="subunit">
    <text evidence="1">Part of the 50S ribosomal subunit.</text>
</comment>
<comment type="similarity">
    <text evidence="1">Belongs to the universal ribosomal protein uL16 family.</text>
</comment>
<organism>
    <name type="scientific">Bacillus anthracis (strain A0248)</name>
    <dbReference type="NCBI Taxonomy" id="592021"/>
    <lineage>
        <taxon>Bacteria</taxon>
        <taxon>Bacillati</taxon>
        <taxon>Bacillota</taxon>
        <taxon>Bacilli</taxon>
        <taxon>Bacillales</taxon>
        <taxon>Bacillaceae</taxon>
        <taxon>Bacillus</taxon>
        <taxon>Bacillus cereus group</taxon>
    </lineage>
</organism>
<sequence>MLMPKRVKYRREHRGKMRGRAKGGTEIAFGEFGLQAQAASWITNRQIEAARRAMTRYMKRGGKVWIKIFPSKPYTAKPLEVRMGSGKGAPEGWVAVVKPGKIMFEIAGVSEEVAREALRLAAHKLPVKCKFVKREENGGESNEN</sequence>
<evidence type="ECO:0000255" key="1">
    <source>
        <dbReference type="HAMAP-Rule" id="MF_01342"/>
    </source>
</evidence>
<evidence type="ECO:0000305" key="2"/>
<dbReference type="EMBL" id="CP001598">
    <property type="protein sequence ID" value="ACQ47099.1"/>
    <property type="molecule type" value="Genomic_DNA"/>
</dbReference>
<dbReference type="RefSeq" id="WP_000928969.1">
    <property type="nucleotide sequence ID" value="NC_012659.1"/>
</dbReference>
<dbReference type="SMR" id="C3P9R2"/>
<dbReference type="GeneID" id="93010936"/>
<dbReference type="KEGG" id="bai:BAA_0133"/>
<dbReference type="HOGENOM" id="CLU_078858_2_1_9"/>
<dbReference type="GO" id="GO:0022625">
    <property type="term" value="C:cytosolic large ribosomal subunit"/>
    <property type="evidence" value="ECO:0007669"/>
    <property type="project" value="TreeGrafter"/>
</dbReference>
<dbReference type="GO" id="GO:0019843">
    <property type="term" value="F:rRNA binding"/>
    <property type="evidence" value="ECO:0007669"/>
    <property type="project" value="UniProtKB-UniRule"/>
</dbReference>
<dbReference type="GO" id="GO:0003735">
    <property type="term" value="F:structural constituent of ribosome"/>
    <property type="evidence" value="ECO:0007669"/>
    <property type="project" value="InterPro"/>
</dbReference>
<dbReference type="GO" id="GO:0000049">
    <property type="term" value="F:tRNA binding"/>
    <property type="evidence" value="ECO:0007669"/>
    <property type="project" value="UniProtKB-KW"/>
</dbReference>
<dbReference type="GO" id="GO:0006412">
    <property type="term" value="P:translation"/>
    <property type="evidence" value="ECO:0007669"/>
    <property type="project" value="UniProtKB-UniRule"/>
</dbReference>
<dbReference type="CDD" id="cd01433">
    <property type="entry name" value="Ribosomal_L16_L10e"/>
    <property type="match status" value="1"/>
</dbReference>
<dbReference type="FunFam" id="3.90.1170.10:FF:000001">
    <property type="entry name" value="50S ribosomal protein L16"/>
    <property type="match status" value="1"/>
</dbReference>
<dbReference type="Gene3D" id="3.90.1170.10">
    <property type="entry name" value="Ribosomal protein L10e/L16"/>
    <property type="match status" value="1"/>
</dbReference>
<dbReference type="HAMAP" id="MF_01342">
    <property type="entry name" value="Ribosomal_uL16"/>
    <property type="match status" value="1"/>
</dbReference>
<dbReference type="InterPro" id="IPR047873">
    <property type="entry name" value="Ribosomal_uL16"/>
</dbReference>
<dbReference type="InterPro" id="IPR000114">
    <property type="entry name" value="Ribosomal_uL16_bact-type"/>
</dbReference>
<dbReference type="InterPro" id="IPR020798">
    <property type="entry name" value="Ribosomal_uL16_CS"/>
</dbReference>
<dbReference type="InterPro" id="IPR016180">
    <property type="entry name" value="Ribosomal_uL16_dom"/>
</dbReference>
<dbReference type="InterPro" id="IPR036920">
    <property type="entry name" value="Ribosomal_uL16_sf"/>
</dbReference>
<dbReference type="NCBIfam" id="TIGR01164">
    <property type="entry name" value="rplP_bact"/>
    <property type="match status" value="1"/>
</dbReference>
<dbReference type="PANTHER" id="PTHR12220">
    <property type="entry name" value="50S/60S RIBOSOMAL PROTEIN L16"/>
    <property type="match status" value="1"/>
</dbReference>
<dbReference type="PANTHER" id="PTHR12220:SF13">
    <property type="entry name" value="LARGE RIBOSOMAL SUBUNIT PROTEIN UL16M"/>
    <property type="match status" value="1"/>
</dbReference>
<dbReference type="Pfam" id="PF00252">
    <property type="entry name" value="Ribosomal_L16"/>
    <property type="match status" value="1"/>
</dbReference>
<dbReference type="PRINTS" id="PR00060">
    <property type="entry name" value="RIBOSOMALL16"/>
</dbReference>
<dbReference type="SUPFAM" id="SSF54686">
    <property type="entry name" value="Ribosomal protein L16p/L10e"/>
    <property type="match status" value="1"/>
</dbReference>
<dbReference type="PROSITE" id="PS00586">
    <property type="entry name" value="RIBOSOMAL_L16_1"/>
    <property type="match status" value="1"/>
</dbReference>
<dbReference type="PROSITE" id="PS00701">
    <property type="entry name" value="RIBOSOMAL_L16_2"/>
    <property type="match status" value="1"/>
</dbReference>
<gene>
    <name evidence="1" type="primary">rplP</name>
    <name type="ordered locus">BAA_0133</name>
</gene>
<accession>C3P9R2</accession>
<feature type="chain" id="PRO_1000166333" description="Large ribosomal subunit protein uL16">
    <location>
        <begin position="1"/>
        <end position="144"/>
    </location>
</feature>
<reference key="1">
    <citation type="submission" date="2009-04" db="EMBL/GenBank/DDBJ databases">
        <title>Genome sequence of Bacillus anthracis A0248.</title>
        <authorList>
            <person name="Dodson R.J."/>
            <person name="Munk A.C."/>
            <person name="Bruce D."/>
            <person name="Detter C."/>
            <person name="Tapia R."/>
            <person name="Sutton G."/>
            <person name="Sims D."/>
            <person name="Brettin T."/>
        </authorList>
    </citation>
    <scope>NUCLEOTIDE SEQUENCE [LARGE SCALE GENOMIC DNA]</scope>
    <source>
        <strain>A0248</strain>
    </source>
</reference>
<name>RL16_BACAA</name>
<proteinExistence type="inferred from homology"/>
<protein>
    <recommendedName>
        <fullName evidence="1">Large ribosomal subunit protein uL16</fullName>
    </recommendedName>
    <alternativeName>
        <fullName evidence="2">50S ribosomal protein L16</fullName>
    </alternativeName>
</protein>
<keyword id="KW-0687">Ribonucleoprotein</keyword>
<keyword id="KW-0689">Ribosomal protein</keyword>
<keyword id="KW-0694">RNA-binding</keyword>
<keyword id="KW-0699">rRNA-binding</keyword>
<keyword id="KW-0820">tRNA-binding</keyword>